<evidence type="ECO:0000255" key="1">
    <source>
        <dbReference type="HAMAP-Rule" id="MF_00281"/>
    </source>
</evidence>
<name>SYFA_EXIS2</name>
<accession>B1YJZ8</accession>
<sequence>MREQLEALRDEALQLVNQASTQKELNDVRVKYLGKKGPITEVLRGMGKLSAEERPVVGEIANAVRSVIQTELEQRLVDVKQQEMDAKLALEAIDVTLPGRPKQVGQAHLLQQVTDEIEDIFVGLGYTIAEGPEVEQDLFNFEMLNLPKDHPARDMQDSFYITDEILMRTHTSPVQARTMLASKGEPIRILCPGKVYRRDEDDATHSHQFMQVEGLVVGEEISMADLKGTLEAFVKQMFGEAREIRLRPSFFPFTEPSVEVDVSCFKCGGKGCNICKQTGWIEILGAGMVHPHVLEMAEYDSTKMSGFAFGMGIERIAMLKYGVDDIRHFYTNDVRFSEQF</sequence>
<protein>
    <recommendedName>
        <fullName evidence="1">Phenylalanine--tRNA ligase alpha subunit</fullName>
        <ecNumber evidence="1">6.1.1.20</ecNumber>
    </recommendedName>
    <alternativeName>
        <fullName evidence="1">Phenylalanyl-tRNA synthetase alpha subunit</fullName>
        <shortName evidence="1">PheRS</shortName>
    </alternativeName>
</protein>
<keyword id="KW-0030">Aminoacyl-tRNA synthetase</keyword>
<keyword id="KW-0067">ATP-binding</keyword>
<keyword id="KW-0963">Cytoplasm</keyword>
<keyword id="KW-0436">Ligase</keyword>
<keyword id="KW-0460">Magnesium</keyword>
<keyword id="KW-0479">Metal-binding</keyword>
<keyword id="KW-0547">Nucleotide-binding</keyword>
<keyword id="KW-0648">Protein biosynthesis</keyword>
<keyword id="KW-1185">Reference proteome</keyword>
<organism>
    <name type="scientific">Exiguobacterium sibiricum (strain DSM 17290 / CCUG 55495 / CIP 109462 / JCM 13490 / 255-15)</name>
    <dbReference type="NCBI Taxonomy" id="262543"/>
    <lineage>
        <taxon>Bacteria</taxon>
        <taxon>Bacillati</taxon>
        <taxon>Bacillota</taxon>
        <taxon>Bacilli</taxon>
        <taxon>Bacillales</taxon>
        <taxon>Bacillales Family XII. Incertae Sedis</taxon>
        <taxon>Exiguobacterium</taxon>
    </lineage>
</organism>
<proteinExistence type="inferred from homology"/>
<gene>
    <name evidence="1" type="primary">pheS</name>
    <name type="ordered locus">Exig_2184</name>
</gene>
<reference key="1">
    <citation type="submission" date="2008-04" db="EMBL/GenBank/DDBJ databases">
        <title>Complete sequence of chromosome of Exiguobacterium sibiricum 255-15.</title>
        <authorList>
            <consortium name="US DOE Joint Genome Institute"/>
            <person name="Copeland A."/>
            <person name="Lucas S."/>
            <person name="Lapidus A."/>
            <person name="Glavina del Rio T."/>
            <person name="Dalin E."/>
            <person name="Tice H."/>
            <person name="Bruce D."/>
            <person name="Goodwin L."/>
            <person name="Pitluck S."/>
            <person name="Kiss H."/>
            <person name="Chertkov O."/>
            <person name="Monk C."/>
            <person name="Brettin T."/>
            <person name="Detter J.C."/>
            <person name="Han C."/>
            <person name="Kuske C.R."/>
            <person name="Schmutz J."/>
            <person name="Larimer F."/>
            <person name="Land M."/>
            <person name="Hauser L."/>
            <person name="Kyrpides N."/>
            <person name="Mikhailova N."/>
            <person name="Vishnivetskaya T."/>
            <person name="Rodrigues D.F."/>
            <person name="Gilichinsky D."/>
            <person name="Tiedje J."/>
            <person name="Richardson P."/>
        </authorList>
    </citation>
    <scope>NUCLEOTIDE SEQUENCE [LARGE SCALE GENOMIC DNA]</scope>
    <source>
        <strain>DSM 17290 / CCUG 55495 / CIP 109462 / JCM 13490 / 255-15</strain>
    </source>
</reference>
<comment type="catalytic activity">
    <reaction evidence="1">
        <text>tRNA(Phe) + L-phenylalanine + ATP = L-phenylalanyl-tRNA(Phe) + AMP + diphosphate + H(+)</text>
        <dbReference type="Rhea" id="RHEA:19413"/>
        <dbReference type="Rhea" id="RHEA-COMP:9668"/>
        <dbReference type="Rhea" id="RHEA-COMP:9699"/>
        <dbReference type="ChEBI" id="CHEBI:15378"/>
        <dbReference type="ChEBI" id="CHEBI:30616"/>
        <dbReference type="ChEBI" id="CHEBI:33019"/>
        <dbReference type="ChEBI" id="CHEBI:58095"/>
        <dbReference type="ChEBI" id="CHEBI:78442"/>
        <dbReference type="ChEBI" id="CHEBI:78531"/>
        <dbReference type="ChEBI" id="CHEBI:456215"/>
        <dbReference type="EC" id="6.1.1.20"/>
    </reaction>
</comment>
<comment type="cofactor">
    <cofactor evidence="1">
        <name>Mg(2+)</name>
        <dbReference type="ChEBI" id="CHEBI:18420"/>
    </cofactor>
    <text evidence="1">Binds 2 magnesium ions per tetramer.</text>
</comment>
<comment type="subunit">
    <text evidence="1">Tetramer of two alpha and two beta subunits.</text>
</comment>
<comment type="subcellular location">
    <subcellularLocation>
        <location evidence="1">Cytoplasm</location>
    </subcellularLocation>
</comment>
<comment type="similarity">
    <text evidence="1">Belongs to the class-II aminoacyl-tRNA synthetase family. Phe-tRNA synthetase alpha subunit type 1 subfamily.</text>
</comment>
<dbReference type="EC" id="6.1.1.20" evidence="1"/>
<dbReference type="EMBL" id="CP001022">
    <property type="protein sequence ID" value="ACB61636.1"/>
    <property type="molecule type" value="Genomic_DNA"/>
</dbReference>
<dbReference type="RefSeq" id="WP_012371053.1">
    <property type="nucleotide sequence ID" value="NC_010556.1"/>
</dbReference>
<dbReference type="SMR" id="B1YJZ8"/>
<dbReference type="STRING" id="262543.Exig_2184"/>
<dbReference type="KEGG" id="esi:Exig_2184"/>
<dbReference type="eggNOG" id="COG0016">
    <property type="taxonomic scope" value="Bacteria"/>
</dbReference>
<dbReference type="HOGENOM" id="CLU_025086_0_1_9"/>
<dbReference type="OrthoDB" id="9800719at2"/>
<dbReference type="Proteomes" id="UP000001681">
    <property type="component" value="Chromosome"/>
</dbReference>
<dbReference type="GO" id="GO:0005737">
    <property type="term" value="C:cytoplasm"/>
    <property type="evidence" value="ECO:0007669"/>
    <property type="project" value="UniProtKB-SubCell"/>
</dbReference>
<dbReference type="GO" id="GO:0005524">
    <property type="term" value="F:ATP binding"/>
    <property type="evidence" value="ECO:0007669"/>
    <property type="project" value="UniProtKB-UniRule"/>
</dbReference>
<dbReference type="GO" id="GO:0140096">
    <property type="term" value="F:catalytic activity, acting on a protein"/>
    <property type="evidence" value="ECO:0007669"/>
    <property type="project" value="UniProtKB-ARBA"/>
</dbReference>
<dbReference type="GO" id="GO:0000287">
    <property type="term" value="F:magnesium ion binding"/>
    <property type="evidence" value="ECO:0007669"/>
    <property type="project" value="UniProtKB-UniRule"/>
</dbReference>
<dbReference type="GO" id="GO:0004826">
    <property type="term" value="F:phenylalanine-tRNA ligase activity"/>
    <property type="evidence" value="ECO:0007669"/>
    <property type="project" value="UniProtKB-UniRule"/>
</dbReference>
<dbReference type="GO" id="GO:0016740">
    <property type="term" value="F:transferase activity"/>
    <property type="evidence" value="ECO:0007669"/>
    <property type="project" value="UniProtKB-ARBA"/>
</dbReference>
<dbReference type="GO" id="GO:0000049">
    <property type="term" value="F:tRNA binding"/>
    <property type="evidence" value="ECO:0007669"/>
    <property type="project" value="InterPro"/>
</dbReference>
<dbReference type="GO" id="GO:0006432">
    <property type="term" value="P:phenylalanyl-tRNA aminoacylation"/>
    <property type="evidence" value="ECO:0007669"/>
    <property type="project" value="UniProtKB-UniRule"/>
</dbReference>
<dbReference type="CDD" id="cd00496">
    <property type="entry name" value="PheRS_alpha_core"/>
    <property type="match status" value="1"/>
</dbReference>
<dbReference type="FunFam" id="3.30.930.10:FF:000003">
    <property type="entry name" value="Phenylalanine--tRNA ligase alpha subunit"/>
    <property type="match status" value="1"/>
</dbReference>
<dbReference type="Gene3D" id="3.30.930.10">
    <property type="entry name" value="Bira Bifunctional Protein, Domain 2"/>
    <property type="match status" value="1"/>
</dbReference>
<dbReference type="HAMAP" id="MF_00281">
    <property type="entry name" value="Phe_tRNA_synth_alpha1"/>
    <property type="match status" value="1"/>
</dbReference>
<dbReference type="InterPro" id="IPR006195">
    <property type="entry name" value="aa-tRNA-synth_II"/>
</dbReference>
<dbReference type="InterPro" id="IPR045864">
    <property type="entry name" value="aa-tRNA-synth_II/BPL/LPL"/>
</dbReference>
<dbReference type="InterPro" id="IPR004529">
    <property type="entry name" value="Phe-tRNA-synth_IIc_asu"/>
</dbReference>
<dbReference type="InterPro" id="IPR004188">
    <property type="entry name" value="Phe-tRNA_ligase_II_N"/>
</dbReference>
<dbReference type="InterPro" id="IPR022911">
    <property type="entry name" value="Phe_tRNA_ligase_alpha1_bac"/>
</dbReference>
<dbReference type="InterPro" id="IPR002319">
    <property type="entry name" value="Phenylalanyl-tRNA_Synthase"/>
</dbReference>
<dbReference type="InterPro" id="IPR010978">
    <property type="entry name" value="tRNA-bd_arm"/>
</dbReference>
<dbReference type="NCBIfam" id="TIGR00468">
    <property type="entry name" value="pheS"/>
    <property type="match status" value="1"/>
</dbReference>
<dbReference type="PANTHER" id="PTHR11538:SF41">
    <property type="entry name" value="PHENYLALANINE--TRNA LIGASE, MITOCHONDRIAL"/>
    <property type="match status" value="1"/>
</dbReference>
<dbReference type="PANTHER" id="PTHR11538">
    <property type="entry name" value="PHENYLALANYL-TRNA SYNTHETASE"/>
    <property type="match status" value="1"/>
</dbReference>
<dbReference type="Pfam" id="PF02912">
    <property type="entry name" value="Phe_tRNA-synt_N"/>
    <property type="match status" value="1"/>
</dbReference>
<dbReference type="Pfam" id="PF01409">
    <property type="entry name" value="tRNA-synt_2d"/>
    <property type="match status" value="1"/>
</dbReference>
<dbReference type="SUPFAM" id="SSF55681">
    <property type="entry name" value="Class II aaRS and biotin synthetases"/>
    <property type="match status" value="1"/>
</dbReference>
<dbReference type="SUPFAM" id="SSF46589">
    <property type="entry name" value="tRNA-binding arm"/>
    <property type="match status" value="1"/>
</dbReference>
<dbReference type="PROSITE" id="PS50862">
    <property type="entry name" value="AA_TRNA_LIGASE_II"/>
    <property type="match status" value="1"/>
</dbReference>
<feature type="chain" id="PRO_1000114873" description="Phenylalanine--tRNA ligase alpha subunit">
    <location>
        <begin position="1"/>
        <end position="340"/>
    </location>
</feature>
<feature type="binding site" evidence="1">
    <location>
        <position position="255"/>
    </location>
    <ligand>
        <name>Mg(2+)</name>
        <dbReference type="ChEBI" id="CHEBI:18420"/>
        <note>shared with beta subunit</note>
    </ligand>
</feature>